<sequence length="189" mass="21248">MPKVSDTDLAERKVEILSGARHCFATYGYDGATVARLEETIGKSRGAIFHHYGNKDQLFLEVAHEDMRKMAELAADEGLIGAIRTLVKSNDLTDWWGMRVEITRRVNIDPCFAAKWELDQLALRETVRTRLREQRASGRIRKDVEIETIAQTLELVLEGVLGRLAQRQGTEGLSDALDFVESALRSPGH</sequence>
<protein>
    <recommendedName>
        <fullName evidence="1">HTH-type transcriptional repressor AcnR</fullName>
    </recommendedName>
</protein>
<proteinExistence type="inferred from homology"/>
<gene>
    <name evidence="1" type="primary">acnR</name>
    <name type="ordered locus">jk0970</name>
</gene>
<keyword id="KW-0238">DNA-binding</keyword>
<keyword id="KW-0460">Magnesium</keyword>
<keyword id="KW-0479">Metal-binding</keyword>
<keyword id="KW-1185">Reference proteome</keyword>
<keyword id="KW-0678">Repressor</keyword>
<keyword id="KW-0804">Transcription</keyword>
<keyword id="KW-0805">Transcription regulation</keyword>
<organism>
    <name type="scientific">Corynebacterium jeikeium (strain K411)</name>
    <dbReference type="NCBI Taxonomy" id="306537"/>
    <lineage>
        <taxon>Bacteria</taxon>
        <taxon>Bacillati</taxon>
        <taxon>Actinomycetota</taxon>
        <taxon>Actinomycetes</taxon>
        <taxon>Mycobacteriales</taxon>
        <taxon>Corynebacteriaceae</taxon>
        <taxon>Corynebacterium</taxon>
    </lineage>
</organism>
<comment type="function">
    <text evidence="1">AcnR negatively controls the expression of the aconitase gene acn.</text>
</comment>
<comment type="subunit">
    <text evidence="1">Homodimer.</text>
</comment>
<accession>Q4JVM3</accession>
<name>ACNR_CORJK</name>
<reference key="1">
    <citation type="journal article" date="2005" name="J. Bacteriol.">
        <title>Complete genome sequence and analysis of the multiresistant nosocomial pathogen Corynebacterium jeikeium K411, a lipid-requiring bacterium of the human skin flora.</title>
        <authorList>
            <person name="Tauch A."/>
            <person name="Kaiser O."/>
            <person name="Hain T."/>
            <person name="Goesmann A."/>
            <person name="Weisshaar B."/>
            <person name="Albersmeier A."/>
            <person name="Bekel T."/>
            <person name="Bischoff N."/>
            <person name="Brune I."/>
            <person name="Chakraborty T."/>
            <person name="Kalinowski J."/>
            <person name="Meyer F."/>
            <person name="Rupp O."/>
            <person name="Schneiker S."/>
            <person name="Viehoever P."/>
            <person name="Puehler A."/>
        </authorList>
    </citation>
    <scope>NUCLEOTIDE SEQUENCE [LARGE SCALE GENOMIC DNA]</scope>
    <source>
        <strain>K411</strain>
    </source>
</reference>
<evidence type="ECO:0000250" key="1">
    <source>
        <dbReference type="UniProtKB" id="Q8NQ97"/>
    </source>
</evidence>
<evidence type="ECO:0000255" key="2">
    <source>
        <dbReference type="PROSITE-ProRule" id="PRU00335"/>
    </source>
</evidence>
<feature type="chain" id="PRO_0000070572" description="HTH-type transcriptional repressor AcnR">
    <location>
        <begin position="1"/>
        <end position="189"/>
    </location>
</feature>
<feature type="domain" description="HTH tetR-type" evidence="2">
    <location>
        <begin position="10"/>
        <end position="70"/>
    </location>
</feature>
<feature type="DNA-binding region" description="H-T-H motif" evidence="2">
    <location>
        <begin position="33"/>
        <end position="52"/>
    </location>
</feature>
<feature type="binding site" evidence="1">
    <location>
        <begin position="79"/>
        <end position="80"/>
    </location>
    <ligand>
        <name>citrate</name>
        <dbReference type="ChEBI" id="CHEBI:16947"/>
    </ligand>
</feature>
<feature type="binding site" evidence="1">
    <location>
        <position position="130"/>
    </location>
    <ligand>
        <name>citrate</name>
        <dbReference type="ChEBI" id="CHEBI:16947"/>
    </ligand>
</feature>
<feature type="binding site" evidence="1">
    <location>
        <position position="134"/>
    </location>
    <ligand>
        <name>citrate</name>
        <dbReference type="ChEBI" id="CHEBI:16947"/>
    </ligand>
</feature>
<feature type="binding site" evidence="1">
    <location>
        <position position="181"/>
    </location>
    <ligand>
        <name>Mg(2+)</name>
        <dbReference type="ChEBI" id="CHEBI:18420"/>
    </ligand>
</feature>
<feature type="binding site" evidence="1">
    <location>
        <position position="185"/>
    </location>
    <ligand>
        <name>citrate</name>
        <dbReference type="ChEBI" id="CHEBI:16947"/>
    </ligand>
</feature>
<dbReference type="EMBL" id="CR931997">
    <property type="protein sequence ID" value="CAI37134.1"/>
    <property type="molecule type" value="Genomic_DNA"/>
</dbReference>
<dbReference type="RefSeq" id="WP_011273550.1">
    <property type="nucleotide sequence ID" value="NC_007164.1"/>
</dbReference>
<dbReference type="SMR" id="Q4JVM3"/>
<dbReference type="STRING" id="306537.jk0970"/>
<dbReference type="KEGG" id="cjk:jk0970"/>
<dbReference type="PATRIC" id="fig|306537.10.peg.981"/>
<dbReference type="eggNOG" id="COG1309">
    <property type="taxonomic scope" value="Bacteria"/>
</dbReference>
<dbReference type="HOGENOM" id="CLU_069356_15_12_11"/>
<dbReference type="OrthoDB" id="5816932at2"/>
<dbReference type="Proteomes" id="UP000000545">
    <property type="component" value="Chromosome"/>
</dbReference>
<dbReference type="GO" id="GO:0003677">
    <property type="term" value="F:DNA binding"/>
    <property type="evidence" value="ECO:0000250"/>
    <property type="project" value="UniProtKB"/>
</dbReference>
<dbReference type="GO" id="GO:0000287">
    <property type="term" value="F:magnesium ion binding"/>
    <property type="evidence" value="ECO:0000250"/>
    <property type="project" value="UniProtKB"/>
</dbReference>
<dbReference type="GO" id="GO:0006355">
    <property type="term" value="P:regulation of DNA-templated transcription"/>
    <property type="evidence" value="ECO:0000250"/>
    <property type="project" value="UniProtKB"/>
</dbReference>
<dbReference type="FunFam" id="1.10.357.10:FF:000013">
    <property type="entry name" value="TetR family transcriptional regulator"/>
    <property type="match status" value="1"/>
</dbReference>
<dbReference type="Gene3D" id="1.10.357.10">
    <property type="entry name" value="Tetracycline Repressor, domain 2"/>
    <property type="match status" value="1"/>
</dbReference>
<dbReference type="InterPro" id="IPR009057">
    <property type="entry name" value="Homeodomain-like_sf"/>
</dbReference>
<dbReference type="InterPro" id="IPR001647">
    <property type="entry name" value="HTH_TetR"/>
</dbReference>
<dbReference type="InterPro" id="IPR036271">
    <property type="entry name" value="Tet_transcr_reg_TetR-rel_C_sf"/>
</dbReference>
<dbReference type="PANTHER" id="PTHR47506:SF6">
    <property type="entry name" value="HTH-TYPE TRANSCRIPTIONAL REPRESSOR NEMR"/>
    <property type="match status" value="1"/>
</dbReference>
<dbReference type="PANTHER" id="PTHR47506">
    <property type="entry name" value="TRANSCRIPTIONAL REGULATORY PROTEIN"/>
    <property type="match status" value="1"/>
</dbReference>
<dbReference type="Pfam" id="PF00440">
    <property type="entry name" value="TetR_N"/>
    <property type="match status" value="1"/>
</dbReference>
<dbReference type="PRINTS" id="PR00455">
    <property type="entry name" value="HTHTETR"/>
</dbReference>
<dbReference type="SUPFAM" id="SSF46689">
    <property type="entry name" value="Homeodomain-like"/>
    <property type="match status" value="1"/>
</dbReference>
<dbReference type="SUPFAM" id="SSF48498">
    <property type="entry name" value="Tetracyclin repressor-like, C-terminal domain"/>
    <property type="match status" value="1"/>
</dbReference>
<dbReference type="PROSITE" id="PS50977">
    <property type="entry name" value="HTH_TETR_2"/>
    <property type="match status" value="1"/>
</dbReference>